<keyword id="KW-0963">Cytoplasm</keyword>
<keyword id="KW-0251">Elongation factor</keyword>
<keyword id="KW-0648">Protein biosynthesis</keyword>
<gene>
    <name evidence="1" type="primary">efp</name>
    <name type="ordered locus">SA1359</name>
</gene>
<name>EFP_STAAN</name>
<proteinExistence type="evidence at protein level"/>
<evidence type="ECO:0000255" key="1">
    <source>
        <dbReference type="HAMAP-Rule" id="MF_00141"/>
    </source>
</evidence>
<reference key="1">
    <citation type="journal article" date="2001" name="Lancet">
        <title>Whole genome sequencing of meticillin-resistant Staphylococcus aureus.</title>
        <authorList>
            <person name="Kuroda M."/>
            <person name="Ohta T."/>
            <person name="Uchiyama I."/>
            <person name="Baba T."/>
            <person name="Yuzawa H."/>
            <person name="Kobayashi I."/>
            <person name="Cui L."/>
            <person name="Oguchi A."/>
            <person name="Aoki K."/>
            <person name="Nagai Y."/>
            <person name="Lian J.-Q."/>
            <person name="Ito T."/>
            <person name="Kanamori M."/>
            <person name="Matsumaru H."/>
            <person name="Maruyama A."/>
            <person name="Murakami H."/>
            <person name="Hosoyama A."/>
            <person name="Mizutani-Ui Y."/>
            <person name="Takahashi N.K."/>
            <person name="Sawano T."/>
            <person name="Inoue R."/>
            <person name="Kaito C."/>
            <person name="Sekimizu K."/>
            <person name="Hirakawa H."/>
            <person name="Kuhara S."/>
            <person name="Goto S."/>
            <person name="Yabuzaki J."/>
            <person name="Kanehisa M."/>
            <person name="Yamashita A."/>
            <person name="Oshima K."/>
            <person name="Furuya K."/>
            <person name="Yoshino C."/>
            <person name="Shiba T."/>
            <person name="Hattori M."/>
            <person name="Ogasawara N."/>
            <person name="Hayashi H."/>
            <person name="Hiramatsu K."/>
        </authorList>
    </citation>
    <scope>NUCLEOTIDE SEQUENCE [LARGE SCALE GENOMIC DNA]</scope>
    <source>
        <strain>N315</strain>
    </source>
</reference>
<reference key="2">
    <citation type="journal article" date="2005" name="J. Microbiol. Methods">
        <title>Correlation of proteomic and transcriptomic profiles of Staphylococcus aureus during the post-exponential phase of growth.</title>
        <authorList>
            <person name="Scherl A."/>
            <person name="Francois P."/>
            <person name="Bento M."/>
            <person name="Deshusses J.M."/>
            <person name="Charbonnier Y."/>
            <person name="Converset V."/>
            <person name="Huyghe A."/>
            <person name="Walter N."/>
            <person name="Hoogland C."/>
            <person name="Appel R.D."/>
            <person name="Sanchez J.-C."/>
            <person name="Zimmermann-Ivol C.G."/>
            <person name="Corthals G.L."/>
            <person name="Hochstrasser D.F."/>
            <person name="Schrenzel J."/>
        </authorList>
    </citation>
    <scope>IDENTIFICATION BY MASS SPECTROMETRY</scope>
    <source>
        <strain>N315</strain>
    </source>
</reference>
<reference key="3">
    <citation type="submission" date="2007-10" db="UniProtKB">
        <title>Shotgun proteomic analysis of total and membrane protein extracts of S. aureus strain N315.</title>
        <authorList>
            <person name="Vaezzadeh A.R."/>
            <person name="Deshusses J."/>
            <person name="Lescuyer P."/>
            <person name="Hochstrasser D.F."/>
        </authorList>
    </citation>
    <scope>IDENTIFICATION BY MASS SPECTROMETRY [LARGE SCALE ANALYSIS]</scope>
    <source>
        <strain>N315</strain>
    </source>
</reference>
<sequence length="185" mass="20554">MISVNDFKTGLTISVDNAIWKVIDFQHVKPGKGSAFVRSKLRNLRTGAIQEKTFRAGEKVEPAMIENRRMQYLYADGDNHVFMDNESFEQTELSSDYLKEELNYLKEGMEVQIQTYEGETIGVELPKTVELTVTETEPGIKGDTATGATKSATVETGYTLNVPLFVNEGDVLIINTGDGSYISRG</sequence>
<comment type="function">
    <text evidence="1">Involved in peptide bond synthesis. Stimulates efficient translation and peptide-bond synthesis on native or reconstituted 70S ribosomes in vitro. Probably functions indirectly by altering the affinity of the ribosome for aminoacyl-tRNA, thus increasing their reactivity as acceptors for peptidyl transferase.</text>
</comment>
<comment type="pathway">
    <text evidence="1">Protein biosynthesis; polypeptide chain elongation.</text>
</comment>
<comment type="subcellular location">
    <subcellularLocation>
        <location evidence="1">Cytoplasm</location>
    </subcellularLocation>
</comment>
<comment type="similarity">
    <text evidence="1">Belongs to the elongation factor P family.</text>
</comment>
<dbReference type="EMBL" id="BA000018">
    <property type="protein sequence ID" value="BAB42621.1"/>
    <property type="molecule type" value="Genomic_DNA"/>
</dbReference>
<dbReference type="PIR" id="H89932">
    <property type="entry name" value="H89932"/>
</dbReference>
<dbReference type="RefSeq" id="WP_000626504.1">
    <property type="nucleotide sequence ID" value="NC_002745.2"/>
</dbReference>
<dbReference type="SMR" id="P99066"/>
<dbReference type="EnsemblBacteria" id="BAB42621">
    <property type="protein sequence ID" value="BAB42621"/>
    <property type="gene ID" value="BAB42621"/>
</dbReference>
<dbReference type="KEGG" id="sau:SA1359"/>
<dbReference type="HOGENOM" id="CLU_074944_0_1_9"/>
<dbReference type="UniPathway" id="UPA00345"/>
<dbReference type="GO" id="GO:0005737">
    <property type="term" value="C:cytoplasm"/>
    <property type="evidence" value="ECO:0007669"/>
    <property type="project" value="UniProtKB-SubCell"/>
</dbReference>
<dbReference type="GO" id="GO:0003746">
    <property type="term" value="F:translation elongation factor activity"/>
    <property type="evidence" value="ECO:0007669"/>
    <property type="project" value="UniProtKB-UniRule"/>
</dbReference>
<dbReference type="GO" id="GO:0043043">
    <property type="term" value="P:peptide biosynthetic process"/>
    <property type="evidence" value="ECO:0007669"/>
    <property type="project" value="InterPro"/>
</dbReference>
<dbReference type="CDD" id="cd04470">
    <property type="entry name" value="S1_EF-P_repeat_1"/>
    <property type="match status" value="1"/>
</dbReference>
<dbReference type="CDD" id="cd05794">
    <property type="entry name" value="S1_EF-P_repeat_2"/>
    <property type="match status" value="1"/>
</dbReference>
<dbReference type="FunFam" id="2.30.30.30:FF:000010">
    <property type="entry name" value="Elongation factor P"/>
    <property type="match status" value="1"/>
</dbReference>
<dbReference type="FunFam" id="2.40.50.140:FF:000004">
    <property type="entry name" value="Elongation factor P"/>
    <property type="match status" value="1"/>
</dbReference>
<dbReference type="FunFam" id="2.40.50.140:FF:000009">
    <property type="entry name" value="Elongation factor P"/>
    <property type="match status" value="1"/>
</dbReference>
<dbReference type="Gene3D" id="2.30.30.30">
    <property type="match status" value="1"/>
</dbReference>
<dbReference type="Gene3D" id="2.40.50.140">
    <property type="entry name" value="Nucleic acid-binding proteins"/>
    <property type="match status" value="2"/>
</dbReference>
<dbReference type="HAMAP" id="MF_00141">
    <property type="entry name" value="EF_P"/>
    <property type="match status" value="1"/>
</dbReference>
<dbReference type="InterPro" id="IPR015365">
    <property type="entry name" value="Elong-fact-P_C"/>
</dbReference>
<dbReference type="InterPro" id="IPR012340">
    <property type="entry name" value="NA-bd_OB-fold"/>
</dbReference>
<dbReference type="InterPro" id="IPR014722">
    <property type="entry name" value="Rib_uL2_dom2"/>
</dbReference>
<dbReference type="InterPro" id="IPR020599">
    <property type="entry name" value="Transl_elong_fac_P/YeiP"/>
</dbReference>
<dbReference type="InterPro" id="IPR013185">
    <property type="entry name" value="Transl_elong_KOW-like"/>
</dbReference>
<dbReference type="InterPro" id="IPR001059">
    <property type="entry name" value="Transl_elong_P/YeiP_cen"/>
</dbReference>
<dbReference type="InterPro" id="IPR013852">
    <property type="entry name" value="Transl_elong_P/YeiP_CS"/>
</dbReference>
<dbReference type="InterPro" id="IPR011768">
    <property type="entry name" value="Transl_elongation_fac_P"/>
</dbReference>
<dbReference type="InterPro" id="IPR008991">
    <property type="entry name" value="Translation_prot_SH3-like_sf"/>
</dbReference>
<dbReference type="NCBIfam" id="TIGR00038">
    <property type="entry name" value="efp"/>
    <property type="match status" value="1"/>
</dbReference>
<dbReference type="NCBIfam" id="NF001810">
    <property type="entry name" value="PRK00529.1"/>
    <property type="match status" value="1"/>
</dbReference>
<dbReference type="PANTHER" id="PTHR30053">
    <property type="entry name" value="ELONGATION FACTOR P"/>
    <property type="match status" value="1"/>
</dbReference>
<dbReference type="PANTHER" id="PTHR30053:SF12">
    <property type="entry name" value="ELONGATION FACTOR P (EF-P) FAMILY PROTEIN"/>
    <property type="match status" value="1"/>
</dbReference>
<dbReference type="Pfam" id="PF01132">
    <property type="entry name" value="EFP"/>
    <property type="match status" value="1"/>
</dbReference>
<dbReference type="Pfam" id="PF08207">
    <property type="entry name" value="EFP_N"/>
    <property type="match status" value="1"/>
</dbReference>
<dbReference type="Pfam" id="PF09285">
    <property type="entry name" value="Elong-fact-P_C"/>
    <property type="match status" value="1"/>
</dbReference>
<dbReference type="PIRSF" id="PIRSF005901">
    <property type="entry name" value="EF-P"/>
    <property type="match status" value="1"/>
</dbReference>
<dbReference type="SMART" id="SM01185">
    <property type="entry name" value="EFP"/>
    <property type="match status" value="1"/>
</dbReference>
<dbReference type="SMART" id="SM00841">
    <property type="entry name" value="Elong-fact-P_C"/>
    <property type="match status" value="1"/>
</dbReference>
<dbReference type="SUPFAM" id="SSF50249">
    <property type="entry name" value="Nucleic acid-binding proteins"/>
    <property type="match status" value="2"/>
</dbReference>
<dbReference type="SUPFAM" id="SSF50104">
    <property type="entry name" value="Translation proteins SH3-like domain"/>
    <property type="match status" value="1"/>
</dbReference>
<dbReference type="PROSITE" id="PS01275">
    <property type="entry name" value="EFP"/>
    <property type="match status" value="1"/>
</dbReference>
<accession>P99066</accession>
<accession>Q99TW5</accession>
<protein>
    <recommendedName>
        <fullName evidence="1">Elongation factor P</fullName>
        <shortName evidence="1">EF-P</shortName>
    </recommendedName>
</protein>
<organism>
    <name type="scientific">Staphylococcus aureus (strain N315)</name>
    <dbReference type="NCBI Taxonomy" id="158879"/>
    <lineage>
        <taxon>Bacteria</taxon>
        <taxon>Bacillati</taxon>
        <taxon>Bacillota</taxon>
        <taxon>Bacilli</taxon>
        <taxon>Bacillales</taxon>
        <taxon>Staphylococcaceae</taxon>
        <taxon>Staphylococcus</taxon>
    </lineage>
</organism>
<feature type="chain" id="PRO_0000094330" description="Elongation factor P">
    <location>
        <begin position="1"/>
        <end position="185"/>
    </location>
</feature>